<sequence length="386" mass="41323">MAIASCFFCVPTPNTAISESNLTWPHIASFPRLSSSSSFNGVISAKSISFNRRVPITPVLSASSGNGGSDNNGGGLSGGGGGGDGGKNDGDGHGDEDRDRNRNEAMLLLKESGIELESLPKDLAAAIEAGRIPGSVITRFLELQKSAVMRWLMQFGGFRERLLADDLFMAKLAMECGVGIFTKTAAEYERRRENFFNELEVVFADVAMAIIADFMLVYLPAPTVSLRPPLALTAGGISKFFHNCPDNAFQVALSGTSYTLLQRLGAITRNGAKLFAVGTTSSLVGTAITNAFIKARKAVDQNSEGEVETVPIVSTSVAYGVYMAVSSNLRYQIVAGVIEQRLLEPMLHQHKLALSALCFAVRTGNTFLGSLLWVDYARLIGIQKSH</sequence>
<feature type="transit peptide" description="Chloroplast" evidence="2">
    <location>
        <begin position="1"/>
        <end position="61"/>
    </location>
</feature>
<feature type="chain" id="PRO_0000433443" description="Protein RETICULATA-RELATED 4, chloroplastic" evidence="2">
    <location>
        <begin position="62"/>
        <end position="386"/>
    </location>
</feature>
<feature type="transmembrane region" description="Helical" evidence="2">
    <location>
        <begin position="201"/>
        <end position="221"/>
    </location>
</feature>
<feature type="transmembrane region" description="Helical" evidence="2">
    <location>
        <begin position="273"/>
        <end position="293"/>
    </location>
</feature>
<feature type="region of interest" description="Disordered" evidence="3">
    <location>
        <begin position="61"/>
        <end position="99"/>
    </location>
</feature>
<feature type="compositionally biased region" description="Gly residues" evidence="3">
    <location>
        <begin position="65"/>
        <end position="85"/>
    </location>
</feature>
<feature type="compositionally biased region" description="Basic and acidic residues" evidence="3">
    <location>
        <begin position="86"/>
        <end position="99"/>
    </location>
</feature>
<feature type="sequence conflict" description="In Ref. 4; BAD44296." evidence="6" ref="4">
    <original>A</original>
    <variation>D</variation>
    <location>
        <position position="335"/>
    </location>
</feature>
<organism>
    <name type="scientific">Arabidopsis thaliana</name>
    <name type="common">Mouse-ear cress</name>
    <dbReference type="NCBI Taxonomy" id="3702"/>
    <lineage>
        <taxon>Eukaryota</taxon>
        <taxon>Viridiplantae</taxon>
        <taxon>Streptophyta</taxon>
        <taxon>Embryophyta</taxon>
        <taxon>Tracheophyta</taxon>
        <taxon>Spermatophyta</taxon>
        <taxon>Magnoliopsida</taxon>
        <taxon>eudicotyledons</taxon>
        <taxon>Gunneridae</taxon>
        <taxon>Pentapetalae</taxon>
        <taxon>rosids</taxon>
        <taxon>malvids</taxon>
        <taxon>Brassicales</taxon>
        <taxon>Brassicaceae</taxon>
        <taxon>Camelineae</taxon>
        <taxon>Arabidopsis</taxon>
    </lineage>
</organism>
<protein>
    <recommendedName>
        <fullName evidence="5">Protein RETICULATA-RELATED 4, chloroplastic</fullName>
    </recommendedName>
</protein>
<comment type="function">
    <text evidence="7">May play a role in leaf development.</text>
</comment>
<comment type="subcellular location">
    <subcellularLocation>
        <location evidence="1">Plastid</location>
        <location evidence="1">Chloroplast membrane</location>
        <topology evidence="2">Multi-pass membrane protein</topology>
    </subcellularLocation>
</comment>
<comment type="disruption phenotype">
    <text evidence="4">Pale interveinal phenotype due to marked reduction in the density of mesophyll cells in interveinal regions of leaves.</text>
</comment>
<comment type="similarity">
    <text evidence="6">Belongs to the RETICULATA family.</text>
</comment>
<reference key="1">
    <citation type="journal article" date="2000" name="Nature">
        <title>Sequence and analysis of chromosome 5 of the plant Arabidopsis thaliana.</title>
        <authorList>
            <person name="Tabata S."/>
            <person name="Kaneko T."/>
            <person name="Nakamura Y."/>
            <person name="Kotani H."/>
            <person name="Kato T."/>
            <person name="Asamizu E."/>
            <person name="Miyajima N."/>
            <person name="Sasamoto S."/>
            <person name="Kimura T."/>
            <person name="Hosouchi T."/>
            <person name="Kawashima K."/>
            <person name="Kohara M."/>
            <person name="Matsumoto M."/>
            <person name="Matsuno A."/>
            <person name="Muraki A."/>
            <person name="Nakayama S."/>
            <person name="Nakazaki N."/>
            <person name="Naruo K."/>
            <person name="Okumura S."/>
            <person name="Shinpo S."/>
            <person name="Takeuchi C."/>
            <person name="Wada T."/>
            <person name="Watanabe A."/>
            <person name="Yamada M."/>
            <person name="Yasuda M."/>
            <person name="Sato S."/>
            <person name="de la Bastide M."/>
            <person name="Huang E."/>
            <person name="Spiegel L."/>
            <person name="Gnoj L."/>
            <person name="O'Shaughnessy A."/>
            <person name="Preston R."/>
            <person name="Habermann K."/>
            <person name="Murray J."/>
            <person name="Johnson D."/>
            <person name="Rohlfing T."/>
            <person name="Nelson J."/>
            <person name="Stoneking T."/>
            <person name="Pepin K."/>
            <person name="Spieth J."/>
            <person name="Sekhon M."/>
            <person name="Armstrong J."/>
            <person name="Becker M."/>
            <person name="Belter E."/>
            <person name="Cordum H."/>
            <person name="Cordes M."/>
            <person name="Courtney L."/>
            <person name="Courtney W."/>
            <person name="Dante M."/>
            <person name="Du H."/>
            <person name="Edwards J."/>
            <person name="Fryman J."/>
            <person name="Haakensen B."/>
            <person name="Lamar E."/>
            <person name="Latreille P."/>
            <person name="Leonard S."/>
            <person name="Meyer R."/>
            <person name="Mulvaney E."/>
            <person name="Ozersky P."/>
            <person name="Riley A."/>
            <person name="Strowmatt C."/>
            <person name="Wagner-McPherson C."/>
            <person name="Wollam A."/>
            <person name="Yoakum M."/>
            <person name="Bell M."/>
            <person name="Dedhia N."/>
            <person name="Parnell L."/>
            <person name="Shah R."/>
            <person name="Rodriguez M."/>
            <person name="Hoon See L."/>
            <person name="Vil D."/>
            <person name="Baker J."/>
            <person name="Kirchoff K."/>
            <person name="Toth K."/>
            <person name="King L."/>
            <person name="Bahret A."/>
            <person name="Miller B."/>
            <person name="Marra M.A."/>
            <person name="Martienssen R."/>
            <person name="McCombie W.R."/>
            <person name="Wilson R.K."/>
            <person name="Murphy G."/>
            <person name="Bancroft I."/>
            <person name="Volckaert G."/>
            <person name="Wambutt R."/>
            <person name="Duesterhoeft A."/>
            <person name="Stiekema W."/>
            <person name="Pohl T."/>
            <person name="Entian K.-D."/>
            <person name="Terryn N."/>
            <person name="Hartley N."/>
            <person name="Bent E."/>
            <person name="Johnson S."/>
            <person name="Langham S.-A."/>
            <person name="McCullagh B."/>
            <person name="Robben J."/>
            <person name="Grymonprez B."/>
            <person name="Zimmermann W."/>
            <person name="Ramsperger U."/>
            <person name="Wedler H."/>
            <person name="Balke K."/>
            <person name="Wedler E."/>
            <person name="Peters S."/>
            <person name="van Staveren M."/>
            <person name="Dirkse W."/>
            <person name="Mooijman P."/>
            <person name="Klein Lankhorst R."/>
            <person name="Weitzenegger T."/>
            <person name="Bothe G."/>
            <person name="Rose M."/>
            <person name="Hauf J."/>
            <person name="Berneiser S."/>
            <person name="Hempel S."/>
            <person name="Feldpausch M."/>
            <person name="Lamberth S."/>
            <person name="Villarroel R."/>
            <person name="Gielen J."/>
            <person name="Ardiles W."/>
            <person name="Bents O."/>
            <person name="Lemcke K."/>
            <person name="Kolesov G."/>
            <person name="Mayer K.F.X."/>
            <person name="Rudd S."/>
            <person name="Schoof H."/>
            <person name="Schueller C."/>
            <person name="Zaccaria P."/>
            <person name="Mewes H.-W."/>
            <person name="Bevan M."/>
            <person name="Fransz P.F."/>
        </authorList>
    </citation>
    <scope>NUCLEOTIDE SEQUENCE [LARGE SCALE GENOMIC DNA]</scope>
    <source>
        <strain>cv. Columbia</strain>
    </source>
</reference>
<reference key="2">
    <citation type="journal article" date="2017" name="Plant J.">
        <title>Araport11: a complete reannotation of the Arabidopsis thaliana reference genome.</title>
        <authorList>
            <person name="Cheng C.Y."/>
            <person name="Krishnakumar V."/>
            <person name="Chan A.P."/>
            <person name="Thibaud-Nissen F."/>
            <person name="Schobel S."/>
            <person name="Town C.D."/>
        </authorList>
    </citation>
    <scope>GENOME REANNOTATION</scope>
    <source>
        <strain>cv. Columbia</strain>
    </source>
</reference>
<reference key="3">
    <citation type="journal article" date="2003" name="Science">
        <title>Empirical analysis of transcriptional activity in the Arabidopsis genome.</title>
        <authorList>
            <person name="Yamada K."/>
            <person name="Lim J."/>
            <person name="Dale J.M."/>
            <person name="Chen H."/>
            <person name="Shinn P."/>
            <person name="Palm C.J."/>
            <person name="Southwick A.M."/>
            <person name="Wu H.C."/>
            <person name="Kim C.J."/>
            <person name="Nguyen M."/>
            <person name="Pham P.K."/>
            <person name="Cheuk R.F."/>
            <person name="Karlin-Newmann G."/>
            <person name="Liu S.X."/>
            <person name="Lam B."/>
            <person name="Sakano H."/>
            <person name="Wu T."/>
            <person name="Yu G."/>
            <person name="Miranda M."/>
            <person name="Quach H.L."/>
            <person name="Tripp M."/>
            <person name="Chang C.H."/>
            <person name="Lee J.M."/>
            <person name="Toriumi M.J."/>
            <person name="Chan M.M."/>
            <person name="Tang C.C."/>
            <person name="Onodera C.S."/>
            <person name="Deng J.M."/>
            <person name="Akiyama K."/>
            <person name="Ansari Y."/>
            <person name="Arakawa T."/>
            <person name="Banh J."/>
            <person name="Banno F."/>
            <person name="Bowser L."/>
            <person name="Brooks S.Y."/>
            <person name="Carninci P."/>
            <person name="Chao Q."/>
            <person name="Choy N."/>
            <person name="Enju A."/>
            <person name="Goldsmith A.D."/>
            <person name="Gurjal M."/>
            <person name="Hansen N.F."/>
            <person name="Hayashizaki Y."/>
            <person name="Johnson-Hopson C."/>
            <person name="Hsuan V.W."/>
            <person name="Iida K."/>
            <person name="Karnes M."/>
            <person name="Khan S."/>
            <person name="Koesema E."/>
            <person name="Ishida J."/>
            <person name="Jiang P.X."/>
            <person name="Jones T."/>
            <person name="Kawai J."/>
            <person name="Kamiya A."/>
            <person name="Meyers C."/>
            <person name="Nakajima M."/>
            <person name="Narusaka M."/>
            <person name="Seki M."/>
            <person name="Sakurai T."/>
            <person name="Satou M."/>
            <person name="Tamse R."/>
            <person name="Vaysberg M."/>
            <person name="Wallender E.K."/>
            <person name="Wong C."/>
            <person name="Yamamura Y."/>
            <person name="Yuan S."/>
            <person name="Shinozaki K."/>
            <person name="Davis R.W."/>
            <person name="Theologis A."/>
            <person name="Ecker J.R."/>
        </authorList>
    </citation>
    <scope>NUCLEOTIDE SEQUENCE [LARGE SCALE MRNA]</scope>
    <source>
        <strain>cv. Columbia</strain>
    </source>
</reference>
<reference key="4">
    <citation type="submission" date="2004-09" db="EMBL/GenBank/DDBJ databases">
        <title>Large-scale analysis of RIKEN Arabidopsis full-length (RAFL) cDNAs.</title>
        <authorList>
            <person name="Totoki Y."/>
            <person name="Seki M."/>
            <person name="Ishida J."/>
            <person name="Nakajima M."/>
            <person name="Enju A."/>
            <person name="Kamiya A."/>
            <person name="Narusaka M."/>
            <person name="Shin-i T."/>
            <person name="Nakagawa M."/>
            <person name="Sakamoto N."/>
            <person name="Oishi K."/>
            <person name="Kohara Y."/>
            <person name="Kobayashi M."/>
            <person name="Toyoda A."/>
            <person name="Sakaki Y."/>
            <person name="Sakurai T."/>
            <person name="Iida K."/>
            <person name="Akiyama K."/>
            <person name="Satou M."/>
            <person name="Toyoda T."/>
            <person name="Konagaya A."/>
            <person name="Carninci P."/>
            <person name="Kawai J."/>
            <person name="Hayashizaki Y."/>
            <person name="Shinozaki K."/>
        </authorList>
    </citation>
    <scope>NUCLEOTIDE SEQUENCE [LARGE SCALE MRNA]</scope>
    <source>
        <strain>cv. Columbia</strain>
    </source>
</reference>
<reference key="5">
    <citation type="journal article" date="2013" name="Plant Physiol.">
        <title>Functional redundancy and divergence within the Arabidopsis RETICULATA-RELATED gene family.</title>
        <authorList>
            <person name="Perez-Perez J.M."/>
            <person name="Esteve-Bruna D."/>
            <person name="Gonzalez-Bayon R."/>
            <person name="Kangasjarvi S."/>
            <person name="Caldana C."/>
            <person name="Hannah M.A."/>
            <person name="Willmitzer L."/>
            <person name="Ponce M.R."/>
            <person name="Micol J.L."/>
        </authorList>
    </citation>
    <scope>FUNCTION</scope>
    <scope>GENE FAMILY</scope>
    <scope>NOMENCLATURE</scope>
    <scope>DISRUPTION PHENOTYPE</scope>
</reference>
<name>RER4_ARATH</name>
<proteinExistence type="evidence at transcript level"/>
<dbReference type="EMBL" id="AL592312">
    <property type="protein sequence ID" value="CAC42908.1"/>
    <property type="molecule type" value="Genomic_DNA"/>
</dbReference>
<dbReference type="EMBL" id="CP002688">
    <property type="protein sequence ID" value="AED91814.1"/>
    <property type="molecule type" value="Genomic_DNA"/>
</dbReference>
<dbReference type="EMBL" id="AY091130">
    <property type="protein sequence ID" value="AAM14079.1"/>
    <property type="molecule type" value="mRNA"/>
</dbReference>
<dbReference type="EMBL" id="AY114001">
    <property type="protein sequence ID" value="AAM45049.1"/>
    <property type="molecule type" value="mRNA"/>
</dbReference>
<dbReference type="EMBL" id="BT002454">
    <property type="protein sequence ID" value="AAO00814.1"/>
    <property type="molecule type" value="mRNA"/>
</dbReference>
<dbReference type="EMBL" id="BT008470">
    <property type="protein sequence ID" value="AAP37829.1"/>
    <property type="molecule type" value="mRNA"/>
</dbReference>
<dbReference type="EMBL" id="AK176209">
    <property type="protein sequence ID" value="BAD43972.1"/>
    <property type="molecule type" value="mRNA"/>
</dbReference>
<dbReference type="EMBL" id="AK176533">
    <property type="protein sequence ID" value="BAD44296.1"/>
    <property type="molecule type" value="mRNA"/>
</dbReference>
<dbReference type="RefSeq" id="NP_568280.1">
    <property type="nucleotide sequence ID" value="NM_121285.4"/>
</dbReference>
<dbReference type="FunCoup" id="Q94CJ5">
    <property type="interactions" value="364"/>
</dbReference>
<dbReference type="STRING" id="3702.Q94CJ5"/>
<dbReference type="GlyGen" id="Q94CJ5">
    <property type="glycosylation" value="1 site"/>
</dbReference>
<dbReference type="PaxDb" id="3702-AT5G12470.1"/>
<dbReference type="ProteomicsDB" id="234725"/>
<dbReference type="EnsemblPlants" id="AT5G12470.1">
    <property type="protein sequence ID" value="AT5G12470.1"/>
    <property type="gene ID" value="AT5G12470"/>
</dbReference>
<dbReference type="GeneID" id="831122"/>
<dbReference type="Gramene" id="AT5G12470.1">
    <property type="protein sequence ID" value="AT5G12470.1"/>
    <property type="gene ID" value="AT5G12470"/>
</dbReference>
<dbReference type="KEGG" id="ath:AT5G12470"/>
<dbReference type="Araport" id="AT5G12470"/>
<dbReference type="TAIR" id="AT5G12470">
    <property type="gene designation" value="RER4"/>
</dbReference>
<dbReference type="eggNOG" id="ENOG502QQX6">
    <property type="taxonomic scope" value="Eukaryota"/>
</dbReference>
<dbReference type="HOGENOM" id="CLU_036961_2_1_1"/>
<dbReference type="InParanoid" id="Q94CJ5"/>
<dbReference type="OMA" id="CFFCVPT"/>
<dbReference type="OrthoDB" id="205639at2759"/>
<dbReference type="PhylomeDB" id="Q94CJ5"/>
<dbReference type="PRO" id="PR:Q94CJ5"/>
<dbReference type="Proteomes" id="UP000006548">
    <property type="component" value="Chromosome 5"/>
</dbReference>
<dbReference type="ExpressionAtlas" id="Q94CJ5">
    <property type="expression patterns" value="baseline and differential"/>
</dbReference>
<dbReference type="GO" id="GO:0009507">
    <property type="term" value="C:chloroplast"/>
    <property type="evidence" value="ECO:0007005"/>
    <property type="project" value="TAIR"/>
</dbReference>
<dbReference type="GO" id="GO:0009941">
    <property type="term" value="C:chloroplast envelope"/>
    <property type="evidence" value="ECO:0007005"/>
    <property type="project" value="TAIR"/>
</dbReference>
<dbReference type="GO" id="GO:0009706">
    <property type="term" value="C:chloroplast inner membrane"/>
    <property type="evidence" value="ECO:0007005"/>
    <property type="project" value="TAIR"/>
</dbReference>
<dbReference type="GO" id="GO:0009536">
    <property type="term" value="C:plastid"/>
    <property type="evidence" value="ECO:0007005"/>
    <property type="project" value="TAIR"/>
</dbReference>
<dbReference type="InterPro" id="IPR021825">
    <property type="entry name" value="RETICULATA-related"/>
</dbReference>
<dbReference type="PANTHER" id="PTHR31620">
    <property type="entry name" value="PROTEIN RETICULATA-RELATED 2, CHLOROPLASTIC-RELATED"/>
    <property type="match status" value="1"/>
</dbReference>
<dbReference type="PANTHER" id="PTHR31620:SF14">
    <property type="entry name" value="PROTEIN RETICULATA-RELATED 4, CHLOROPLASTIC"/>
    <property type="match status" value="1"/>
</dbReference>
<dbReference type="Pfam" id="PF11891">
    <property type="entry name" value="RETICULATA-like"/>
    <property type="match status" value="1"/>
</dbReference>
<gene>
    <name evidence="5" type="primary">RER4</name>
    <name evidence="8" type="ordered locus">At5g12470</name>
</gene>
<keyword id="KW-0150">Chloroplast</keyword>
<keyword id="KW-0217">Developmental protein</keyword>
<keyword id="KW-0472">Membrane</keyword>
<keyword id="KW-0934">Plastid</keyword>
<keyword id="KW-1185">Reference proteome</keyword>
<keyword id="KW-0809">Transit peptide</keyword>
<keyword id="KW-0812">Transmembrane</keyword>
<keyword id="KW-1133">Transmembrane helix</keyword>
<evidence type="ECO:0000250" key="1">
    <source>
        <dbReference type="UniProtKB" id="Q9C9Z2"/>
    </source>
</evidence>
<evidence type="ECO:0000255" key="2"/>
<evidence type="ECO:0000256" key="3">
    <source>
        <dbReference type="SAM" id="MobiDB-lite"/>
    </source>
</evidence>
<evidence type="ECO:0000269" key="4">
    <source>
    </source>
</evidence>
<evidence type="ECO:0000303" key="5">
    <source>
    </source>
</evidence>
<evidence type="ECO:0000305" key="6"/>
<evidence type="ECO:0000305" key="7">
    <source>
    </source>
</evidence>
<evidence type="ECO:0000312" key="8">
    <source>
        <dbReference type="Araport" id="AT5G12470"/>
    </source>
</evidence>
<accession>Q94CJ5</accession>
<accession>Q67YD5</accession>